<feature type="chain" id="PRO_0000359953" description="SPbeta prophage-derived uncharacterized protein YotN">
    <location>
        <begin position="1"/>
        <end position="58"/>
    </location>
</feature>
<protein>
    <recommendedName>
        <fullName>SPbeta prophage-derived uncharacterized protein YotN</fullName>
    </recommendedName>
</protein>
<name>YOTN_BACSU</name>
<gene>
    <name type="primary">yotN</name>
    <name type="synonym">yokJ</name>
    <name type="ordered locus">BSU19820</name>
</gene>
<proteinExistence type="predicted"/>
<dbReference type="EMBL" id="AF006665">
    <property type="protein sequence ID" value="AAB81146.1"/>
    <property type="molecule type" value="Genomic_DNA"/>
</dbReference>
<dbReference type="EMBL" id="AL009126">
    <property type="protein sequence ID" value="CAB13873.1"/>
    <property type="molecule type" value="Genomic_DNA"/>
</dbReference>
<dbReference type="SMR" id="O34850"/>
<dbReference type="FunCoup" id="O34850">
    <property type="interactions" value="120"/>
</dbReference>
<dbReference type="STRING" id="224308.BSU19820"/>
<dbReference type="PaxDb" id="224308-BSU19820"/>
<dbReference type="EnsemblBacteria" id="CAB13873">
    <property type="protein sequence ID" value="CAB13873"/>
    <property type="gene ID" value="BSU_19820"/>
</dbReference>
<dbReference type="GeneID" id="940072"/>
<dbReference type="KEGG" id="bsu:BSU19820"/>
<dbReference type="PATRIC" id="fig|224308.179.peg.2171"/>
<dbReference type="InParanoid" id="O34850"/>
<dbReference type="OrthoDB" id="2910833at2"/>
<dbReference type="BioCyc" id="BSUB:BSU19820-MONOMER"/>
<dbReference type="Proteomes" id="UP000001570">
    <property type="component" value="Chromosome"/>
</dbReference>
<organism>
    <name type="scientific">Bacillus subtilis (strain 168)</name>
    <dbReference type="NCBI Taxonomy" id="224308"/>
    <lineage>
        <taxon>Bacteria</taxon>
        <taxon>Bacillati</taxon>
        <taxon>Bacillota</taxon>
        <taxon>Bacilli</taxon>
        <taxon>Bacillales</taxon>
        <taxon>Bacillaceae</taxon>
        <taxon>Bacillus</taxon>
    </lineage>
</organism>
<keyword id="KW-1185">Reference proteome</keyword>
<reference key="1">
    <citation type="journal article" date="1998" name="DNA Res.">
        <title>Sequence analysis of the Bacillus subtilis 168 chromosome region between the sspC and odhA loci (184 degrees-180 degrees).</title>
        <authorList>
            <person name="Ghim S.-Y."/>
            <person name="Choi S.-K."/>
            <person name="Shin B.-S."/>
            <person name="Jeong Y.-M."/>
            <person name="Sorokin A."/>
            <person name="Ehrlich S.D."/>
            <person name="Park S.-H."/>
        </authorList>
    </citation>
    <scope>NUCLEOTIDE SEQUENCE [GENOMIC DNA]</scope>
    <source>
        <strain>168</strain>
    </source>
</reference>
<reference key="2">
    <citation type="journal article" date="1997" name="Nature">
        <title>The complete genome sequence of the Gram-positive bacterium Bacillus subtilis.</title>
        <authorList>
            <person name="Kunst F."/>
            <person name="Ogasawara N."/>
            <person name="Moszer I."/>
            <person name="Albertini A.M."/>
            <person name="Alloni G."/>
            <person name="Azevedo V."/>
            <person name="Bertero M.G."/>
            <person name="Bessieres P."/>
            <person name="Bolotin A."/>
            <person name="Borchert S."/>
            <person name="Borriss R."/>
            <person name="Boursier L."/>
            <person name="Brans A."/>
            <person name="Braun M."/>
            <person name="Brignell S.C."/>
            <person name="Bron S."/>
            <person name="Brouillet S."/>
            <person name="Bruschi C.V."/>
            <person name="Caldwell B."/>
            <person name="Capuano V."/>
            <person name="Carter N.M."/>
            <person name="Choi S.-K."/>
            <person name="Codani J.-J."/>
            <person name="Connerton I.F."/>
            <person name="Cummings N.J."/>
            <person name="Daniel R.A."/>
            <person name="Denizot F."/>
            <person name="Devine K.M."/>
            <person name="Duesterhoeft A."/>
            <person name="Ehrlich S.D."/>
            <person name="Emmerson P.T."/>
            <person name="Entian K.-D."/>
            <person name="Errington J."/>
            <person name="Fabret C."/>
            <person name="Ferrari E."/>
            <person name="Foulger D."/>
            <person name="Fritz C."/>
            <person name="Fujita M."/>
            <person name="Fujita Y."/>
            <person name="Fuma S."/>
            <person name="Galizzi A."/>
            <person name="Galleron N."/>
            <person name="Ghim S.-Y."/>
            <person name="Glaser P."/>
            <person name="Goffeau A."/>
            <person name="Golightly E.J."/>
            <person name="Grandi G."/>
            <person name="Guiseppi G."/>
            <person name="Guy B.J."/>
            <person name="Haga K."/>
            <person name="Haiech J."/>
            <person name="Harwood C.R."/>
            <person name="Henaut A."/>
            <person name="Hilbert H."/>
            <person name="Holsappel S."/>
            <person name="Hosono S."/>
            <person name="Hullo M.-F."/>
            <person name="Itaya M."/>
            <person name="Jones L.-M."/>
            <person name="Joris B."/>
            <person name="Karamata D."/>
            <person name="Kasahara Y."/>
            <person name="Klaerr-Blanchard M."/>
            <person name="Klein C."/>
            <person name="Kobayashi Y."/>
            <person name="Koetter P."/>
            <person name="Koningstein G."/>
            <person name="Krogh S."/>
            <person name="Kumano M."/>
            <person name="Kurita K."/>
            <person name="Lapidus A."/>
            <person name="Lardinois S."/>
            <person name="Lauber J."/>
            <person name="Lazarevic V."/>
            <person name="Lee S.-M."/>
            <person name="Levine A."/>
            <person name="Liu H."/>
            <person name="Masuda S."/>
            <person name="Mauel C."/>
            <person name="Medigue C."/>
            <person name="Medina N."/>
            <person name="Mellado R.P."/>
            <person name="Mizuno M."/>
            <person name="Moestl D."/>
            <person name="Nakai S."/>
            <person name="Noback M."/>
            <person name="Noone D."/>
            <person name="O'Reilly M."/>
            <person name="Ogawa K."/>
            <person name="Ogiwara A."/>
            <person name="Oudega B."/>
            <person name="Park S.-H."/>
            <person name="Parro V."/>
            <person name="Pohl T.M."/>
            <person name="Portetelle D."/>
            <person name="Porwollik S."/>
            <person name="Prescott A.M."/>
            <person name="Presecan E."/>
            <person name="Pujic P."/>
            <person name="Purnelle B."/>
            <person name="Rapoport G."/>
            <person name="Rey M."/>
            <person name="Reynolds S."/>
            <person name="Rieger M."/>
            <person name="Rivolta C."/>
            <person name="Rocha E."/>
            <person name="Roche B."/>
            <person name="Rose M."/>
            <person name="Sadaie Y."/>
            <person name="Sato T."/>
            <person name="Scanlan E."/>
            <person name="Schleich S."/>
            <person name="Schroeter R."/>
            <person name="Scoffone F."/>
            <person name="Sekiguchi J."/>
            <person name="Sekowska A."/>
            <person name="Seror S.J."/>
            <person name="Serror P."/>
            <person name="Shin B.-S."/>
            <person name="Soldo B."/>
            <person name="Sorokin A."/>
            <person name="Tacconi E."/>
            <person name="Takagi T."/>
            <person name="Takahashi H."/>
            <person name="Takemaru K."/>
            <person name="Takeuchi M."/>
            <person name="Tamakoshi A."/>
            <person name="Tanaka T."/>
            <person name="Terpstra P."/>
            <person name="Tognoni A."/>
            <person name="Tosato V."/>
            <person name="Uchiyama S."/>
            <person name="Vandenbol M."/>
            <person name="Vannier F."/>
            <person name="Vassarotti A."/>
            <person name="Viari A."/>
            <person name="Wambutt R."/>
            <person name="Wedler E."/>
            <person name="Wedler H."/>
            <person name="Weitzenegger T."/>
            <person name="Winters P."/>
            <person name="Wipat A."/>
            <person name="Yamamoto H."/>
            <person name="Yamane K."/>
            <person name="Yasumoto K."/>
            <person name="Yata K."/>
            <person name="Yoshida K."/>
            <person name="Yoshikawa H.-F."/>
            <person name="Zumstein E."/>
            <person name="Yoshikawa H."/>
            <person name="Danchin A."/>
        </authorList>
    </citation>
    <scope>NUCLEOTIDE SEQUENCE [LARGE SCALE GENOMIC DNA]</scope>
    <source>
        <strain>168</strain>
    </source>
</reference>
<sequence length="58" mass="7071">MEPYQRYEELKKKTIKVVQKENYSIRYITQDEASNDLDEFYKQFAQHLLEAALERKAE</sequence>
<accession>O34850</accession>
<accession>Q7BVW1</accession>